<dbReference type="EMBL" id="AF046120">
    <property type="protein sequence ID" value="AAC31800.2"/>
    <property type="molecule type" value="Genomic_DNA"/>
</dbReference>
<dbReference type="EMBL" id="CR380952">
    <property type="protein sequence ID" value="CAG59012.1"/>
    <property type="molecule type" value="Genomic_DNA"/>
</dbReference>
<dbReference type="RefSeq" id="XP_446088.1">
    <property type="nucleotide sequence ID" value="XM_446088.1"/>
</dbReference>
<dbReference type="SMR" id="O74208"/>
<dbReference type="FunCoup" id="O74208">
    <property type="interactions" value="231"/>
</dbReference>
<dbReference type="STRING" id="284593.O74208"/>
<dbReference type="EnsemblFungi" id="CAGL0F02717g-T">
    <property type="protein sequence ID" value="CAGL0F02717g-T-p1"/>
    <property type="gene ID" value="CAGL0F02717g"/>
</dbReference>
<dbReference type="GeneID" id="2887804"/>
<dbReference type="KEGG" id="cgr:2887804"/>
<dbReference type="CGD" id="CAL0129834">
    <property type="gene designation" value="PDH1"/>
</dbReference>
<dbReference type="VEuPathDB" id="FungiDB:CAGL0F02717g"/>
<dbReference type="eggNOG" id="KOG0065">
    <property type="taxonomic scope" value="Eukaryota"/>
</dbReference>
<dbReference type="HOGENOM" id="CLU_000604_35_0_1"/>
<dbReference type="InParanoid" id="O74208"/>
<dbReference type="OMA" id="WHDVCYE"/>
<dbReference type="Proteomes" id="UP000002428">
    <property type="component" value="Chromosome F"/>
</dbReference>
<dbReference type="GO" id="GO:0005886">
    <property type="term" value="C:plasma membrane"/>
    <property type="evidence" value="ECO:0000316"/>
    <property type="project" value="CGD"/>
</dbReference>
<dbReference type="GO" id="GO:0008559">
    <property type="term" value="F:ABC-type xenobiotic transporter activity"/>
    <property type="evidence" value="ECO:0000314"/>
    <property type="project" value="CGD"/>
</dbReference>
<dbReference type="GO" id="GO:0005524">
    <property type="term" value="F:ATP binding"/>
    <property type="evidence" value="ECO:0007669"/>
    <property type="project" value="UniProtKB-KW"/>
</dbReference>
<dbReference type="GO" id="GO:0016887">
    <property type="term" value="F:ATP hydrolysis activity"/>
    <property type="evidence" value="ECO:0007669"/>
    <property type="project" value="InterPro"/>
</dbReference>
<dbReference type="GO" id="GO:0009410">
    <property type="term" value="P:response to xenobiotic stimulus"/>
    <property type="evidence" value="ECO:0000247"/>
    <property type="project" value="CGD"/>
</dbReference>
<dbReference type="GO" id="GO:1990961">
    <property type="term" value="P:xenobiotic detoxification by transmembrane export across the plasma membrane"/>
    <property type="evidence" value="ECO:0007669"/>
    <property type="project" value="InterPro"/>
</dbReference>
<dbReference type="CDD" id="cd03233">
    <property type="entry name" value="ABCG_PDR_domain1"/>
    <property type="match status" value="1"/>
</dbReference>
<dbReference type="CDD" id="cd03232">
    <property type="entry name" value="ABCG_PDR_domain2"/>
    <property type="match status" value="1"/>
</dbReference>
<dbReference type="FunFam" id="3.40.50.300:FF:000054">
    <property type="entry name" value="ABC multidrug transporter atrF"/>
    <property type="match status" value="1"/>
</dbReference>
<dbReference type="FunFam" id="3.40.50.300:FF:001262">
    <property type="entry name" value="ABC transporter CDR4"/>
    <property type="match status" value="1"/>
</dbReference>
<dbReference type="Gene3D" id="3.40.50.300">
    <property type="entry name" value="P-loop containing nucleotide triphosphate hydrolases"/>
    <property type="match status" value="2"/>
</dbReference>
<dbReference type="InterPro" id="IPR003593">
    <property type="entry name" value="AAA+_ATPase"/>
</dbReference>
<dbReference type="InterPro" id="IPR013525">
    <property type="entry name" value="ABC2_TM"/>
</dbReference>
<dbReference type="InterPro" id="IPR029481">
    <property type="entry name" value="ABC_trans_N"/>
</dbReference>
<dbReference type="InterPro" id="IPR003439">
    <property type="entry name" value="ABC_transporter-like_ATP-bd"/>
</dbReference>
<dbReference type="InterPro" id="IPR017871">
    <property type="entry name" value="ABC_transporter-like_CS"/>
</dbReference>
<dbReference type="InterPro" id="IPR043926">
    <property type="entry name" value="ABCG_dom"/>
</dbReference>
<dbReference type="InterPro" id="IPR034001">
    <property type="entry name" value="ABCG_PDR_1"/>
</dbReference>
<dbReference type="InterPro" id="IPR034003">
    <property type="entry name" value="ABCG_PDR_2"/>
</dbReference>
<dbReference type="InterPro" id="IPR005285">
    <property type="entry name" value="Drug-R_PDR/CDR"/>
</dbReference>
<dbReference type="InterPro" id="IPR027417">
    <property type="entry name" value="P-loop_NTPase"/>
</dbReference>
<dbReference type="InterPro" id="IPR010929">
    <property type="entry name" value="PDR_CDR_ABC"/>
</dbReference>
<dbReference type="NCBIfam" id="TIGR00956">
    <property type="entry name" value="3a01205"/>
    <property type="match status" value="1"/>
</dbReference>
<dbReference type="PANTHER" id="PTHR19241">
    <property type="entry name" value="ATP-BINDING CASSETTE TRANSPORTER"/>
    <property type="match status" value="1"/>
</dbReference>
<dbReference type="Pfam" id="PF01061">
    <property type="entry name" value="ABC2_membrane"/>
    <property type="match status" value="2"/>
</dbReference>
<dbReference type="Pfam" id="PF19055">
    <property type="entry name" value="ABC2_membrane_7"/>
    <property type="match status" value="1"/>
</dbReference>
<dbReference type="Pfam" id="PF00005">
    <property type="entry name" value="ABC_tran"/>
    <property type="match status" value="2"/>
</dbReference>
<dbReference type="Pfam" id="PF14510">
    <property type="entry name" value="ABC_trans_N"/>
    <property type="match status" value="1"/>
</dbReference>
<dbReference type="Pfam" id="PF06422">
    <property type="entry name" value="PDR_CDR"/>
    <property type="match status" value="1"/>
</dbReference>
<dbReference type="SMART" id="SM00382">
    <property type="entry name" value="AAA"/>
    <property type="match status" value="1"/>
</dbReference>
<dbReference type="SUPFAM" id="SSF52540">
    <property type="entry name" value="P-loop containing nucleoside triphosphate hydrolases"/>
    <property type="match status" value="2"/>
</dbReference>
<dbReference type="PROSITE" id="PS00211">
    <property type="entry name" value="ABC_TRANSPORTER_1"/>
    <property type="match status" value="1"/>
</dbReference>
<dbReference type="PROSITE" id="PS50893">
    <property type="entry name" value="ABC_TRANSPORTER_2"/>
    <property type="match status" value="2"/>
</dbReference>
<comment type="function">
    <text evidence="4 5 6 7 8 9 10 11 15 19 20 22 23 24">Pleiotropic ABC efflux transporter that confers resistance to structurally and functionally unrelated compounds including caspofungin or azoles such as fluconazole, itraconazole, posaconazole, voriconazole, and isavuconazole (PubMed:11257032, PubMed:12244114, PubMed:12557277, PubMed:15105134, PubMed:15388433, PubMed:16803598, PubMed:17581937, PubMed:20038613, PubMed:24273749, PubMed:24838041, PubMed:26482310, PubMed:27486188, PubMed:29371812). Does not play a role in the azole resistance in mature biofilms (PubMed:18651314).</text>
</comment>
<comment type="subcellular location">
    <subcellularLocation>
        <location evidence="5">Cell membrane</location>
        <topology evidence="1">Multi-pass membrane protein</topology>
    </subcellularLocation>
</comment>
<comment type="induction">
    <text evidence="8 9 10 11 12 13 14 15 16 17 18 21 23 24 25 26 27">Azole exposure induced expression via regulation by the transcription factor PDR1 that stimulates gene expression via binding to elements called pleiotropic drug response elements (PDREs) (PubMed:15388433, PubMed:19148266, PubMed:25199772, PubMed:29464833). Expression is up-regulated in azole-resistant isolates and in presence of fluconazole (PubMed:16803598, PubMed:17581937, PubMed:18782778, PubMed:19196495, PubMed:20038613, PubMed:27486188, PubMed:29371812, PubMed:9661006). Loss of mitochondrial functions leads to increased expression (PubMed:21321146). Expression is temporary increased during the intermediate phase of biofilm development (PubMed:18651314). Expression is down-regulated by the transcription factor STB5 (PubMed:23229483). Expression is negatively regulated by the transcription factor JJJ1 via inactivation of the PDR1 transcriptional pathway (PubMed:29507891). Expression is also decreased by amphotericin B in voriconazole-resistant strains (PubMed:21282443).</text>
</comment>
<comment type="PTM">
    <text evidence="5">Phosphorylated by PKA. Dephosphorylated on glucose depletion and independently rephosphorylated during glucose exposure or under stress.</text>
</comment>
<comment type="disruption phenotype">
    <text evidence="4 6 20">Increases the susceptibility to rhodamine 6G, cycloheximide and chloramphenicol, and also increases rhodamine 6G accumulation (PubMed:12557277). Suppresses the development of high-frequency azole resistance (HFAR) in a medium containing fluconazole (PubMed:11257032). Impairs the blockage of the efflux of fluconazole by milbemycin A4 oxime when CDR1 is also deleted (PubMed:24838041).</text>
</comment>
<comment type="similarity">
    <text evidence="30">Belongs to the ABC transporter superfamily. ABCG family. PDR (TC 3.A.1.205) subfamily.</text>
</comment>
<evidence type="ECO:0000255" key="1"/>
<evidence type="ECO:0000255" key="2">
    <source>
        <dbReference type="PROSITE-ProRule" id="PRU00434"/>
    </source>
</evidence>
<evidence type="ECO:0000256" key="3">
    <source>
        <dbReference type="SAM" id="MobiDB-lite"/>
    </source>
</evidence>
<evidence type="ECO:0000269" key="4">
    <source>
    </source>
</evidence>
<evidence type="ECO:0000269" key="5">
    <source>
    </source>
</evidence>
<evidence type="ECO:0000269" key="6">
    <source>
    </source>
</evidence>
<evidence type="ECO:0000269" key="7">
    <source>
    </source>
</evidence>
<evidence type="ECO:0000269" key="8">
    <source>
    </source>
</evidence>
<evidence type="ECO:0000269" key="9">
    <source>
    </source>
</evidence>
<evidence type="ECO:0000269" key="10">
    <source>
    </source>
</evidence>
<evidence type="ECO:0000269" key="11">
    <source>
    </source>
</evidence>
<evidence type="ECO:0000269" key="12">
    <source>
    </source>
</evidence>
<evidence type="ECO:0000269" key="13">
    <source>
    </source>
</evidence>
<evidence type="ECO:0000269" key="14">
    <source>
    </source>
</evidence>
<evidence type="ECO:0000269" key="15">
    <source>
    </source>
</evidence>
<evidence type="ECO:0000269" key="16">
    <source>
    </source>
</evidence>
<evidence type="ECO:0000269" key="17">
    <source>
    </source>
</evidence>
<evidence type="ECO:0000269" key="18">
    <source>
    </source>
</evidence>
<evidence type="ECO:0000269" key="19">
    <source>
    </source>
</evidence>
<evidence type="ECO:0000269" key="20">
    <source>
    </source>
</evidence>
<evidence type="ECO:0000269" key="21">
    <source>
    </source>
</evidence>
<evidence type="ECO:0000269" key="22">
    <source>
    </source>
</evidence>
<evidence type="ECO:0000269" key="23">
    <source>
    </source>
</evidence>
<evidence type="ECO:0000269" key="24">
    <source>
    </source>
</evidence>
<evidence type="ECO:0000269" key="25">
    <source>
    </source>
</evidence>
<evidence type="ECO:0000269" key="26">
    <source>
    </source>
</evidence>
<evidence type="ECO:0000269" key="27">
    <source>
    </source>
</evidence>
<evidence type="ECO:0000303" key="28">
    <source>
    </source>
</evidence>
<evidence type="ECO:0000303" key="29">
    <source>
    </source>
</evidence>
<evidence type="ECO:0000305" key="30"/>
<name>PDH1_CANGA</name>
<sequence length="1542" mass="175026">MNTPDDSSVSSVDSHQPYMGFDDNVEKRIRELARSLTQQSLTSSNRSVNKEAPADGSAPLDRVSTRASSIFSADFKGVNPVFSDEEEDDYDARLDPNSDEFSSKAWVQNMAKITTGDPEFYKPYSIGCCWKDLSASGESADVSYQSTFLNLPVKLLNAVWRKARPARESDTFRILKPMDGLLKPGELLVVLGRPGSGCTTLLKSISSTTHGFQISKDSVISYNGLTPNEIKKHYRGEVVYNAEADIHLPHLTVYQTLVTVARLKTPQNRVKGVTREDFANHVTDVAMATYGLSHTRDTKVGNDLVRGVSGGERKRVSIAEVWICGSKFQCWDNATRGLDSATALEFVRALKTQAHIAKNVATVAIYQCSQDAYNLFNKVSVLYEGYQIYFGDAQHAKVYFQKMGYFCPKRQTIPDFLTSITSPAERRINKEYLDKGIKVPQTPLDMVEYWHNSEEYKQLREEIDETLAHQSEDDKEEIKEAHIAKQSKRARPSSPYVVSYMMQVKYILIRNFWRIKNSASVTLFQVFGNSAMAFILGSMFYKIQKGSSADTFYFRGAAMFFAILFNAFSSLLEIFSLYEARPITEKHRTYSLYHPSADAFASVISEIPPKIVTAILFNIIFYFLVNFRRDAGRFFFYFLINVIAVFAMSHLFRCVGSLTKTLQEAMVPASMLLLALSMYTGFAIPRTKMLGWSKWIWYINPLAYLFESLMVNEFHDRRFPCNTYIPRGGAYNDVTGTERVCASVGARPGNDYVLGDDFLKESYDYENKHKWRGFGVGMAYVIFFFFVYLILCEFNEGAKQKGEMLVFPHSVVKRMKKEGKIRDKTKMHTDKNDIENNSESITSNATNEKNMLQDTYDENADSESITSGSRGGSPQVGLSKSEAIFHWQNLCYDVPIKTEVRRILNNVDGWVKPGTLTALMGASGAGKTTLLDCLAERTTMGVITGDVMVNGRPRDTSFSRSIGYCQQQDLHLKTATVRESLRFSAYLRQPSSVSIEEKNEYVEAVIKILEMETYADAVVGVPGEGLNVEQRKRLTIGVELAAKPKLLVFLDEPTSGLDSQTAWATCQLMKKLANHGQAILCTIHQPSAMLMQEFDRLLFLQKGGQTVYFGDLGKGCKTMIKYFEDHGAHKCPPDANPAEWMLEVVGAAPGSHANQDYHEVWRNSEQFKQVKQELEQMEKELSQKELDNDEDANKEFATSLWYQFQLVCVRLFQQYWRTPDYLWSKYILTIFNQLFIGFTFFKADHTLQGLQNQMLSIFMYTVIFNPLLQQYLPTFVQQRDLYEARERPSRTFSWKAFILAQIVVEVPWNIVAGTLAYCIYYYSVGFYANASQAHQLHERGALFWLFSIAFYVYVGSLGLFVISFNEVAETAAHIGSLMFTMALSFCGVMATPDAMPRFWIFMYRVSPLTYLIDALLSTGVANVDIRCSNTELVTFTPPQGLTCGQYMTPYLNVAGTGYLTDPSATDECHFCQFSYTNDFLATVSSKYYRRWRNYGIFICFIVFDYVAGIFLYWLARVPKTNGKIAKNGKTAKVNFIRRLIPF</sequence>
<accession>O74208</accession>
<accession>Q6FUK6</accession>
<proteinExistence type="evidence at protein level"/>
<reference key="1">
    <citation type="journal article" date="1998" name="Antimicrob. Agents Chemother.">
        <title>Fluconazole resistance associated with drug efflux and increased transcription of a drug transporter gene, PDH1, in Candida glabrata.</title>
        <authorList>
            <person name="Miyazaki H."/>
            <person name="Miyazaki Y."/>
            <person name="Geber A."/>
            <person name="Parkinson T."/>
            <person name="Hitchcock C."/>
            <person name="Falconer D.J."/>
            <person name="Ward D.J."/>
            <person name="Marsden K."/>
            <person name="Bennett J.E."/>
        </authorList>
    </citation>
    <scope>NUCLEOTIDE SEQUENCE [GENOMIC DNA]</scope>
    <scope>INDUCTION</scope>
    <source>
        <strain>ATCC 90030 / DSM 11226 / NCCLS 84</strain>
    </source>
</reference>
<reference key="2">
    <citation type="submission" date="2002-11" db="EMBL/GenBank/DDBJ databases">
        <authorList>
            <person name="Izumikawa K."/>
            <person name="Miyazaki Y."/>
            <person name="Miyazaki H."/>
            <person name="Bennett J.E."/>
        </authorList>
    </citation>
    <scope>SEQUENCE REVISION</scope>
</reference>
<reference key="3">
    <citation type="journal article" date="2004" name="Nature">
        <title>Genome evolution in yeasts.</title>
        <authorList>
            <person name="Dujon B."/>
            <person name="Sherman D."/>
            <person name="Fischer G."/>
            <person name="Durrens P."/>
            <person name="Casaregola S."/>
            <person name="Lafontaine I."/>
            <person name="de Montigny J."/>
            <person name="Marck C."/>
            <person name="Neuveglise C."/>
            <person name="Talla E."/>
            <person name="Goffard N."/>
            <person name="Frangeul L."/>
            <person name="Aigle M."/>
            <person name="Anthouard V."/>
            <person name="Babour A."/>
            <person name="Barbe V."/>
            <person name="Barnay S."/>
            <person name="Blanchin S."/>
            <person name="Beckerich J.-M."/>
            <person name="Beyne E."/>
            <person name="Bleykasten C."/>
            <person name="Boisrame A."/>
            <person name="Boyer J."/>
            <person name="Cattolico L."/>
            <person name="Confanioleri F."/>
            <person name="de Daruvar A."/>
            <person name="Despons L."/>
            <person name="Fabre E."/>
            <person name="Fairhead C."/>
            <person name="Ferry-Dumazet H."/>
            <person name="Groppi A."/>
            <person name="Hantraye F."/>
            <person name="Hennequin C."/>
            <person name="Jauniaux N."/>
            <person name="Joyet P."/>
            <person name="Kachouri R."/>
            <person name="Kerrest A."/>
            <person name="Koszul R."/>
            <person name="Lemaire M."/>
            <person name="Lesur I."/>
            <person name="Ma L."/>
            <person name="Muller H."/>
            <person name="Nicaud J.-M."/>
            <person name="Nikolski M."/>
            <person name="Oztas S."/>
            <person name="Ozier-Kalogeropoulos O."/>
            <person name="Pellenz S."/>
            <person name="Potier S."/>
            <person name="Richard G.-F."/>
            <person name="Straub M.-L."/>
            <person name="Suleau A."/>
            <person name="Swennen D."/>
            <person name="Tekaia F."/>
            <person name="Wesolowski-Louvel M."/>
            <person name="Westhof E."/>
            <person name="Wirth B."/>
            <person name="Zeniou-Meyer M."/>
            <person name="Zivanovic Y."/>
            <person name="Bolotin-Fukuhara M."/>
            <person name="Thierry A."/>
            <person name="Bouchier C."/>
            <person name="Caudron B."/>
            <person name="Scarpelli C."/>
            <person name="Gaillardin C."/>
            <person name="Weissenbach J."/>
            <person name="Wincker P."/>
            <person name="Souciet J.-L."/>
        </authorList>
    </citation>
    <scope>NUCLEOTIDE SEQUENCE [LARGE SCALE GENOMIC DNA]</scope>
    <source>
        <strain>ATCC 2001 / BCRC 20586 / JCM 3761 / NBRC 0622 / NRRL Y-65 / CBS 138</strain>
    </source>
</reference>
<reference key="4">
    <citation type="journal article" date="2001" name="Antimicrob. Agents Chemother.">
        <title>Role of ATP-binding-cassette transporter genes in high-frequency acquisition of resistance to azole antifungals in Candida glabrata.</title>
        <authorList>
            <person name="Sanglard D."/>
            <person name="Ischer F."/>
            <person name="Bille J."/>
        </authorList>
    </citation>
    <scope>FUNCTION</scope>
    <scope>DISRUPTION PHENOTYPE</scope>
</reference>
<reference key="5">
    <citation type="journal article" date="2002" name="J. Biol. Chem.">
        <title>Candida glabrata ATP-binding cassette transporters Cdr1p and Pdh1p expressed in a Saccharomyces cerevisiae strain deficient in membrane transporters show phosphorylation-dependent pumping properties.</title>
        <authorList>
            <person name="Wada S."/>
            <person name="Niimi M."/>
            <person name="Niimi K."/>
            <person name="Holmes A.R."/>
            <person name="Monk B.C."/>
            <person name="Cannon R.D."/>
            <person name="Uehara Y."/>
        </authorList>
    </citation>
    <scope>FUNCTION</scope>
    <scope>PHOSPHORYLATION</scope>
    <scope>SUBCELLULAR LOCATION</scope>
</reference>
<reference key="6">
    <citation type="journal article" date="2003" name="Yeast">
        <title>Function of Candida glabrata ABC transporter gene, PDH1.</title>
        <authorList>
            <person name="Izumikawa K."/>
            <person name="Kakeya H."/>
            <person name="Tsai H.F."/>
            <person name="Grimberg B."/>
            <person name="Bennett J.E."/>
        </authorList>
    </citation>
    <scope>FUNCTION</scope>
    <scope>DISRUPTION PHENOTYPE</scope>
</reference>
<reference key="7">
    <citation type="journal article" date="2004" name="Antimicrob. Agents Chemother.">
        <title>Mechanism of increased fluconazole resistance in Candida glabrata during prophylaxis.</title>
        <authorList>
            <person name="Bennett J.E."/>
            <person name="Izumikawa K."/>
            <person name="Marr K.A."/>
        </authorList>
    </citation>
    <scope>FUNCTION</scope>
</reference>
<reference key="8">
    <citation type="journal article" date="2004" name="Antimicrob. Agents Chemother.">
        <title>Azole resistance in Candida glabrata: coordinate upregulation of multidrug transporters and evidence for a Pdr1-like transcription factor.</title>
        <authorList>
            <person name="Vermitsky J.P."/>
            <person name="Edlind T.D."/>
        </authorList>
    </citation>
    <scope>FUNCTION</scope>
    <scope>INDUCTION</scope>
</reference>
<reference key="9">
    <citation type="journal article" date="2006" name="Mol. Microbiol.">
        <title>Pdr1 regulates multidrug resistance in Candida glabrata: gene disruption and genome-wide expression studies.</title>
        <authorList>
            <person name="Vermitsky J.P."/>
            <person name="Earhart K.D."/>
            <person name="Smith W.L."/>
            <person name="Homayouni R."/>
            <person name="Edlind T.D."/>
            <person name="Rogers P.D."/>
        </authorList>
    </citation>
    <scope>FUNCTION</scope>
    <scope>INDUCTION</scope>
</reference>
<reference key="10">
    <citation type="journal article" date="2007" name="J. Clin. Microbiol.">
        <title>Changes in karyotype and azole susceptibility of sequential bloodstream isolates from patients with Candida glabrata candidemia.</title>
        <authorList>
            <person name="Shin J.H."/>
            <person name="Chae M.J."/>
            <person name="Song J.W."/>
            <person name="Jung S.I."/>
            <person name="Cho D."/>
            <person name="Kee S.J."/>
            <person name="Kim S.H."/>
            <person name="Shin M.G."/>
            <person name="Suh S.P."/>
            <person name="Ryang D.W."/>
        </authorList>
    </citation>
    <scope>FUNCTION</scope>
    <scope>INDUCTION</scope>
</reference>
<reference key="11">
    <citation type="journal article" date="2008" name="J. Antimicrob. Chemother.">
        <title>Fungaemia caused by Candida glabrata with reduced susceptibility to fluconazole due to altered gene expression: risk factors, antifungal treatment and outcome.</title>
        <authorList>
            <person name="Tumbarello M."/>
            <person name="Sanguinetti M."/>
            <person name="Trecarichi E.M."/>
            <person name="La Sorda M."/>
            <person name="Rossi M."/>
            <person name="de Carolis E."/>
            <person name="de Gaetano Donati K."/>
            <person name="Fadda G."/>
            <person name="Cauda R."/>
            <person name="Posteraro B."/>
        </authorList>
    </citation>
    <scope>INDUCTION</scope>
</reference>
<reference key="12">
    <citation type="journal article" date="2009" name="Int. J. Antimicrob. Agents">
        <title>Mutations in the CgPDR1 and CgERG11 genes in azole-resistant Candida glabrata clinical isolates from Slovakia.</title>
        <authorList>
            <person name="Berila N."/>
            <person name="Borecka S."/>
            <person name="Dzugasova V."/>
            <person name="Bojnansky J."/>
            <person name="Subik J."/>
        </authorList>
    </citation>
    <scope>INDUCTION</scope>
</reference>
<reference key="13">
    <citation type="journal article" date="2009" name="Med. Mycol.">
        <title>Expression of CgCDR1, CgCDR2, and CgERG11 in Candida glabrata biofilms formed by bloodstream isolates.</title>
        <authorList>
            <person name="Song J.W."/>
            <person name="Shin J.H."/>
            <person name="Kee S.J."/>
            <person name="Kim S.H."/>
            <person name="Shin M.G."/>
            <person name="Suh S.P."/>
            <person name="Ryang D.W."/>
        </authorList>
    </citation>
    <scope>INDUCTION</scope>
    <scope>FUNCTION</scope>
</reference>
<reference key="14">
    <citation type="journal article" date="2009" name="PLoS Pathog.">
        <title>Gain of function mutations in CgPDR1 of Candida glabrata not only mediate antifungal resistance but also enhance virulence.</title>
        <authorList>
            <person name="Ferrari S."/>
            <person name="Ischer F."/>
            <person name="Calabrese D."/>
            <person name="Posteraro B."/>
            <person name="Sanguinetti M."/>
            <person name="Fadda G."/>
            <person name="Rohde B."/>
            <person name="Bauser C."/>
            <person name="Bader O."/>
            <person name="Sanglard D."/>
        </authorList>
    </citation>
    <scope>INDUCTION</scope>
</reference>
<reference key="15">
    <citation type="journal article" date="2010" name="Antimicrob. Agents Chemother.">
        <title>Acquisition of flucytosine, azole, and caspofungin resistance in Candida glabrata bloodstream isolates serially obtained from a hematopoietic stem cell transplant recipient.</title>
        <authorList>
            <person name="Chapeland-Leclerc F."/>
            <person name="Hennequin C."/>
            <person name="Papon N."/>
            <person name="Noel T."/>
            <person name="Girard A."/>
            <person name="Socie G."/>
            <person name="Ribaud P."/>
            <person name="Lacroix C."/>
        </authorList>
    </citation>
    <scope>FUNCTION</scope>
    <scope>INDUCTION</scope>
</reference>
<reference key="16">
    <citation type="journal article" date="2011" name="Antimicrob. Agents Chemother.">
        <title>Voriconazole-induced inhibition of the fungicidal activity of amphotericin B in Candida strains with reduced susceptibility to voriconazole: an effect not predicted by the MIC value alone.</title>
        <authorList>
            <person name="Lignell A."/>
            <person name="Loewdin E."/>
            <person name="Cars O."/>
            <person name="Sanglard D."/>
            <person name="Sjoelin J."/>
        </authorList>
    </citation>
    <scope>INDUCTION</scope>
</reference>
<reference key="17">
    <citation type="journal article" date="2011" name="Antimicrob. Agents Chemother.">
        <title>Loss of mitochondrial functions associated with azole resistance in Candida glabrata results in enhanced virulence in mice.</title>
        <authorList>
            <person name="Ferrari S."/>
            <person name="Sanguinetti M."/>
            <person name="De Bernardis F."/>
            <person name="Torelli R."/>
            <person name="Posteraro B."/>
            <person name="Vandeputte P."/>
            <person name="Sanglard D."/>
        </authorList>
    </citation>
    <scope>INDUCTION</scope>
</reference>
<reference key="18">
    <citation type="journal article" date="2013" name="Antimicrob. Agents Chemother.">
        <title>STB5 is a negative regulator of azole resistance in Candida glabrata.</title>
        <authorList>
            <person name="Noble J.A."/>
            <person name="Tsai H.F."/>
            <person name="Suffis S.D."/>
            <person name="Su Q."/>
            <person name="Myers T.G."/>
            <person name="Bennett J.E."/>
        </authorList>
    </citation>
    <scope>INDUCTION</scope>
</reference>
<reference key="19">
    <citation type="journal article" date="2013" name="Front. Cell. Infect. Microbiol.">
        <title>Interactions between copy number and expression level of genes involved in fluconazole resistance in Candida glabrata.</title>
        <authorList>
            <person name="Abbes S."/>
            <person name="Mary C."/>
            <person name="Sellami H."/>
            <person name="Michel-Nguyen A."/>
            <person name="Ayadi A."/>
            <person name="Ranque S."/>
        </authorList>
    </citation>
    <scope>FUNCTION</scope>
</reference>
<reference key="20">
    <citation type="journal article" date="2014" name="Antimicrob. Agents Chemother.">
        <title>Identification of genomic binding sites for Candida glabrata Pdr1 transcription factor in wild-type and rho0 cells.</title>
        <authorList>
            <person name="Paul S."/>
            <person name="Bair T.B."/>
            <person name="Moye-Rowley W.S."/>
        </authorList>
    </citation>
    <scope>INDUCTION</scope>
</reference>
<reference key="21">
    <citation type="journal article" date="2014" name="FEMS Yeast Res.">
        <title>Milbemycin A4 oxime as a probe of azole transport in Candida glabrata.</title>
        <authorList>
            <person name="Walker B."/>
            <person name="Izumikawa K."/>
            <person name="Tsai H.F."/>
            <person name="Bennett J.E."/>
        </authorList>
    </citation>
    <scope>FUNCTION</scope>
    <scope>DISRUPTION PHENOTYPE</scope>
</reference>
<reference key="22">
    <citation type="journal article" date="2016" name="Antimicrob. Agents Chemother.">
        <title>Activity of isavuconazole and other azoles against Candida clinical isolates and yeast model systems with known azole resistance mechanisms.</title>
        <authorList>
            <person name="Sanglard D."/>
            <person name="Coste A.T."/>
        </authorList>
    </citation>
    <scope>FUNCTION</scope>
</reference>
<reference key="23">
    <citation type="journal article" date="2016" name="MBio">
        <title>Heteroresistance to Fluconazole Is a Continuously Distributed Phenotype among Candida glabrata Clinical Strains Associated with In Vivo Persistence.</title>
        <authorList>
            <person name="Ben-Ami R."/>
            <person name="Zimmerman O."/>
            <person name="Finn T."/>
            <person name="Amit S."/>
            <person name="Novikov A."/>
            <person name="Wertheimer N."/>
            <person name="Lurie-Weinberger M."/>
            <person name="Berman J."/>
        </authorList>
    </citation>
    <scope>FUNCTION</scope>
    <scope>INDUCTION</scope>
</reference>
<reference key="24">
    <citation type="journal article" date="2017" name="Mycobiology">
        <title>Isolated from the urinary tract of a dog with diabetes mellitus.</title>
        <authorList>
            <person name="Kim M."/>
            <person name="Lee H."/>
            <person name="Hwang S.Y."/>
            <person name="Lee I."/>
            <person name="Jung W.H."/>
        </authorList>
    </citation>
    <scope>FUNCTION</scope>
    <scope>INDUCTION</scope>
</reference>
<reference key="25">
    <citation type="journal article" date="2018" name="MSphere">
        <title>Jjj1 is a negative regulator of Pdr1-mediated fluconazole resistance in Candida glabrata.</title>
        <authorList>
            <person name="Whaley S.G."/>
            <person name="Caudle K.E."/>
            <person name="Simonicova L."/>
            <person name="Zhang Q."/>
            <person name="Moye-Rowley W.S."/>
            <person name="Rogers P.D."/>
        </authorList>
    </citation>
    <scope>INDUCTION</scope>
</reference>
<reference key="26">
    <citation type="journal article" date="2018" name="Mycoses">
        <title>CgPDR1 gain-of-function mutations lead to azole-resistance and increased adhesion in clinical Candida glabrata strains.</title>
        <authorList>
            <person name="Ni Q."/>
            <person name="Wang C."/>
            <person name="Tian Y."/>
            <person name="Dong D."/>
            <person name="Jiang C."/>
            <person name="Mao E."/>
            <person name="Peng Y."/>
        </authorList>
    </citation>
    <scope>INDUCTION</scope>
</reference>
<keyword id="KW-0067">ATP-binding</keyword>
<keyword id="KW-1003">Cell membrane</keyword>
<keyword id="KW-0472">Membrane</keyword>
<keyword id="KW-0547">Nucleotide-binding</keyword>
<keyword id="KW-0597">Phosphoprotein</keyword>
<keyword id="KW-1185">Reference proteome</keyword>
<keyword id="KW-0677">Repeat</keyword>
<keyword id="KW-0812">Transmembrane</keyword>
<keyword id="KW-1133">Transmembrane helix</keyword>
<keyword id="KW-0813">Transport</keyword>
<protein>
    <recommendedName>
        <fullName evidence="29">Pleiotropic ABC efflux transporter of multiple drugs PDH1</fullName>
    </recommendedName>
    <alternativeName>
        <fullName evidence="29">P leiomorphic drug resistance homolog 1</fullName>
    </alternativeName>
    <alternativeName>
        <fullName evidence="28">Pleiotropic drug resistance protein 2</fullName>
    </alternativeName>
</protein>
<gene>
    <name evidence="29" type="primary">PDH1</name>
    <name evidence="28" type="synonym">CDR2</name>
    <name type="synonym">CGR1</name>
    <name type="ordered locus">CAGL0F02717g</name>
</gene>
<feature type="chain" id="PRO_0000093439" description="Pleiotropic ABC efflux transporter of multiple drugs PDH1">
    <location>
        <begin position="1"/>
        <end position="1542"/>
    </location>
</feature>
<feature type="topological domain" description="Cytoplasmic" evidence="1">
    <location>
        <begin position="1"/>
        <end position="517"/>
    </location>
</feature>
<feature type="transmembrane region" description="Helical" evidence="1">
    <location>
        <begin position="518"/>
        <end position="540"/>
    </location>
</feature>
<feature type="transmembrane region" description="Helical" evidence="1">
    <location>
        <begin position="552"/>
        <end position="574"/>
    </location>
</feature>
<feature type="transmembrane region" description="Helical" evidence="1">
    <location>
        <begin position="603"/>
        <end position="625"/>
    </location>
</feature>
<feature type="transmembrane region" description="Helical" evidence="1">
    <location>
        <begin position="634"/>
        <end position="652"/>
    </location>
</feature>
<feature type="transmembrane region" description="Helical" evidence="1">
    <location>
        <begin position="662"/>
        <end position="684"/>
    </location>
</feature>
<feature type="transmembrane region" description="Helical" evidence="1">
    <location>
        <begin position="773"/>
        <end position="792"/>
    </location>
</feature>
<feature type="topological domain" description="Cytoplasmic" evidence="1">
    <location>
        <begin position="793"/>
        <end position="1220"/>
    </location>
</feature>
<feature type="transmembrane region" description="Helical" evidence="1">
    <location>
        <begin position="1221"/>
        <end position="1241"/>
    </location>
</feature>
<feature type="transmembrane region" description="Helical" evidence="1">
    <location>
        <begin position="1256"/>
        <end position="1276"/>
    </location>
</feature>
<feature type="transmembrane region" description="Helical" evidence="1">
    <location>
        <begin position="1296"/>
        <end position="1316"/>
    </location>
</feature>
<feature type="transmembrane region" description="Helical" evidence="1">
    <location>
        <begin position="1342"/>
        <end position="1362"/>
    </location>
</feature>
<feature type="transmembrane region" description="Helical" evidence="1">
    <location>
        <begin position="1370"/>
        <end position="1390"/>
    </location>
</feature>
<feature type="transmembrane region" description="Helical" evidence="1">
    <location>
        <begin position="1495"/>
        <end position="1515"/>
    </location>
</feature>
<feature type="topological domain" description="Cytoplasmic" evidence="1">
    <location>
        <begin position="1516"/>
        <end position="1542"/>
    </location>
</feature>
<feature type="domain" description="ABC transporter 1" evidence="2">
    <location>
        <begin position="153"/>
        <end position="409"/>
    </location>
</feature>
<feature type="domain" description="ABC transporter 2" evidence="2">
    <location>
        <begin position="885"/>
        <end position="1128"/>
    </location>
</feature>
<feature type="region of interest" description="Disordered" evidence="3">
    <location>
        <begin position="1"/>
        <end position="61"/>
    </location>
</feature>
<feature type="region of interest" description="Disordered" evidence="3">
    <location>
        <begin position="825"/>
        <end position="846"/>
    </location>
</feature>
<feature type="compositionally biased region" description="Low complexity" evidence="3">
    <location>
        <begin position="1"/>
        <end position="14"/>
    </location>
</feature>
<feature type="compositionally biased region" description="Basic and acidic residues" evidence="3">
    <location>
        <begin position="24"/>
        <end position="33"/>
    </location>
</feature>
<feature type="compositionally biased region" description="Polar residues" evidence="3">
    <location>
        <begin position="35"/>
        <end position="47"/>
    </location>
</feature>
<feature type="compositionally biased region" description="Basic and acidic residues" evidence="3">
    <location>
        <begin position="825"/>
        <end position="834"/>
    </location>
</feature>
<feature type="compositionally biased region" description="Polar residues" evidence="3">
    <location>
        <begin position="835"/>
        <end position="846"/>
    </location>
</feature>
<feature type="binding site" evidence="2">
    <location>
        <begin position="921"/>
        <end position="928"/>
    </location>
    <ligand>
        <name>ATP</name>
        <dbReference type="ChEBI" id="CHEBI:30616"/>
    </ligand>
</feature>
<feature type="sequence conflict" description="In Ref. 1; AAC31800." evidence="30" ref="1">
    <original>K</original>
    <variation>Q</variation>
    <location>
        <position position="438"/>
    </location>
</feature>
<feature type="sequence conflict" description="In Ref. 1; AAC31800." evidence="30" ref="1">
    <original>E</original>
    <variation>D</variation>
    <location>
        <position position="839"/>
    </location>
</feature>
<organism>
    <name type="scientific">Candida glabrata (strain ATCC 2001 / BCRC 20586 / JCM 3761 / NBRC 0622 / NRRL Y-65 / CBS 138)</name>
    <name type="common">Yeast</name>
    <name type="synonym">Nakaseomyces glabratus</name>
    <dbReference type="NCBI Taxonomy" id="284593"/>
    <lineage>
        <taxon>Eukaryota</taxon>
        <taxon>Fungi</taxon>
        <taxon>Dikarya</taxon>
        <taxon>Ascomycota</taxon>
        <taxon>Saccharomycotina</taxon>
        <taxon>Saccharomycetes</taxon>
        <taxon>Saccharomycetales</taxon>
        <taxon>Saccharomycetaceae</taxon>
        <taxon>Nakaseomyces</taxon>
    </lineage>
</organism>